<keyword id="KW-0249">Electron transport</keyword>
<keyword id="KW-0472">Membrane</keyword>
<keyword id="KW-0496">Mitochondrion</keyword>
<keyword id="KW-0999">Mitochondrion inner membrane</keyword>
<keyword id="KW-0520">NAD</keyword>
<keyword id="KW-1185">Reference proteome</keyword>
<keyword id="KW-0679">Respiratory chain</keyword>
<keyword id="KW-1278">Translocase</keyword>
<keyword id="KW-0812">Transmembrane</keyword>
<keyword id="KW-1133">Transmembrane helix</keyword>
<keyword id="KW-0813">Transport</keyword>
<keyword id="KW-0830">Ubiquinone</keyword>
<geneLocation type="mitochondrion"/>
<comment type="function">
    <text evidence="1">Core subunit of the mitochondrial membrane respiratory chain NADH dehydrogenase (Complex I) which catalyzes electron transfer from NADH through the respiratory chain, using ubiquinone as an electron acceptor. Essential for the catalytic activity and assembly of complex I.</text>
</comment>
<comment type="catalytic activity">
    <reaction evidence="1">
        <text>a ubiquinone + NADH + 5 H(+)(in) = a ubiquinol + NAD(+) + 4 H(+)(out)</text>
        <dbReference type="Rhea" id="RHEA:29091"/>
        <dbReference type="Rhea" id="RHEA-COMP:9565"/>
        <dbReference type="Rhea" id="RHEA-COMP:9566"/>
        <dbReference type="ChEBI" id="CHEBI:15378"/>
        <dbReference type="ChEBI" id="CHEBI:16389"/>
        <dbReference type="ChEBI" id="CHEBI:17976"/>
        <dbReference type="ChEBI" id="CHEBI:57540"/>
        <dbReference type="ChEBI" id="CHEBI:57945"/>
        <dbReference type="EC" id="7.1.1.2"/>
    </reaction>
</comment>
<comment type="subunit">
    <text evidence="2">Core subunit of respiratory chain NADH dehydrogenase (Complex I) which is composed of 45 different subunits.</text>
</comment>
<comment type="subcellular location">
    <subcellularLocation>
        <location evidence="2">Mitochondrion inner membrane</location>
        <topology evidence="3">Multi-pass membrane protein</topology>
    </subcellularLocation>
</comment>
<comment type="similarity">
    <text evidence="4">Belongs to the complex I subunit 4 family.</text>
</comment>
<gene>
    <name type="primary">mt-nd4</name>
    <name type="synonym">mtnd4</name>
    <name type="synonym">nd4</name>
</gene>
<name>NU4M_DANRE</name>
<protein>
    <recommendedName>
        <fullName>NADH-ubiquinone oxidoreductase chain 4</fullName>
        <ecNumber evidence="1">7.1.1.2</ecNumber>
    </recommendedName>
    <alternativeName>
        <fullName>NADH dehydrogenase subunit 4</fullName>
    </alternativeName>
</protein>
<proteinExistence type="inferred from homology"/>
<feature type="chain" id="PRO_0000117910" description="NADH-ubiquinone oxidoreductase chain 4">
    <location>
        <begin position="1"/>
        <end position="460"/>
    </location>
</feature>
<feature type="transmembrane region" description="Helical" evidence="3">
    <location>
        <begin position="20"/>
        <end position="42"/>
    </location>
</feature>
<feature type="transmembrane region" description="Helical" evidence="3">
    <location>
        <begin position="61"/>
        <end position="81"/>
    </location>
</feature>
<feature type="transmembrane region" description="Helical" evidence="3">
    <location>
        <begin position="94"/>
        <end position="113"/>
    </location>
</feature>
<feature type="transmembrane region" description="Helical" evidence="3">
    <location>
        <begin position="114"/>
        <end position="134"/>
    </location>
</feature>
<feature type="transmembrane region" description="Helical" evidence="3">
    <location>
        <begin position="148"/>
        <end position="168"/>
    </location>
</feature>
<feature type="transmembrane region" description="Helical" evidence="3">
    <location>
        <begin position="195"/>
        <end position="215"/>
    </location>
</feature>
<feature type="transmembrane region" description="Helical" evidence="3">
    <location>
        <begin position="225"/>
        <end position="245"/>
    </location>
</feature>
<feature type="transmembrane region" description="Helical" evidence="3">
    <location>
        <begin position="258"/>
        <end position="278"/>
    </location>
</feature>
<feature type="transmembrane region" description="Helical" evidence="3">
    <location>
        <begin position="285"/>
        <end position="304"/>
    </location>
</feature>
<feature type="transmembrane region" description="Helical" evidence="3">
    <location>
        <begin position="308"/>
        <end position="330"/>
    </location>
</feature>
<feature type="transmembrane region" description="Helical" evidence="3">
    <location>
        <begin position="351"/>
        <end position="371"/>
    </location>
</feature>
<feature type="transmembrane region" description="Helical" evidence="3">
    <location>
        <begin position="380"/>
        <end position="400"/>
    </location>
</feature>
<feature type="transmembrane region" description="Helical" evidence="3">
    <location>
        <begin position="436"/>
        <end position="456"/>
    </location>
</feature>
<organism>
    <name type="scientific">Danio rerio</name>
    <name type="common">Zebrafish</name>
    <name type="synonym">Brachydanio rerio</name>
    <dbReference type="NCBI Taxonomy" id="7955"/>
    <lineage>
        <taxon>Eukaryota</taxon>
        <taxon>Metazoa</taxon>
        <taxon>Chordata</taxon>
        <taxon>Craniata</taxon>
        <taxon>Vertebrata</taxon>
        <taxon>Euteleostomi</taxon>
        <taxon>Actinopterygii</taxon>
        <taxon>Neopterygii</taxon>
        <taxon>Teleostei</taxon>
        <taxon>Ostariophysi</taxon>
        <taxon>Cypriniformes</taxon>
        <taxon>Danionidae</taxon>
        <taxon>Danioninae</taxon>
        <taxon>Danio</taxon>
    </lineage>
</organism>
<reference key="1">
    <citation type="journal article" date="2001" name="Genome Res.">
        <title>The complete sequence of the zebrafish (Danio rerio) mitochondrial genome and evolutionary patterns in vertebrate mitochondrial DNA.</title>
        <authorList>
            <person name="Broughton R.E."/>
            <person name="Milam J.E."/>
            <person name="Roe B.A."/>
        </authorList>
    </citation>
    <scope>NUCLEOTIDE SEQUENCE [LARGE SCALE GENOMIC DNA]</scope>
    <source>
        <strain evidence="5">Tuebingen</strain>
    </source>
</reference>
<sequence>MLKVLIPTIMLFPTIWLSSSKWLWTTTTMNSFLIAFISLTWLKWTSDTGWNASNSYMAADPLSTPLLVLTCWLLPLMILASQNHINSEPVNRQRMYITLLASLQTFMIMAFGATKIIMFYIMFEATLIPTLIIITRWGNQAERLNAGTYFLFYTLAGSLPLLVALLLLQQSTGTLSMLVLQYSDPLLLNSWGHKIWWAGCLIAFLVKMPLYGMHLWLPKAHVEAPVAGSMILAAVLLKLGGYGMMRMMVMLDPLSKQLAYPFIILALWGVIMTGLVCLRQTDLKSLIAYSSVGHMGLVAGGILIQTPWGFTGAIILMIAHGLTSSALFCLANTSYERTHSRTMILARGLQMVLPLATVWWFIANLANLALPPLPNLMGELMIITALFNWSPWTIIITGMGTLITANYSLYMFLTSQRGSIPEHITNLSPSHTREHLLMTLHLIPIILLMLKPELMWGWCN</sequence>
<accession>Q9MIY1</accession>
<evidence type="ECO:0000250" key="1">
    <source>
        <dbReference type="UniProtKB" id="P03905"/>
    </source>
</evidence>
<evidence type="ECO:0000250" key="2">
    <source>
        <dbReference type="UniProtKB" id="P03910"/>
    </source>
</evidence>
<evidence type="ECO:0000255" key="3"/>
<evidence type="ECO:0000305" key="4"/>
<evidence type="ECO:0000312" key="5">
    <source>
        <dbReference type="Proteomes" id="UP000000437"/>
    </source>
</evidence>
<dbReference type="EC" id="7.1.1.2" evidence="1"/>
<dbReference type="EMBL" id="AC024175">
    <property type="protein sequence ID" value="AAF74306.1"/>
    <property type="molecule type" value="Genomic_DNA"/>
</dbReference>
<dbReference type="RefSeq" id="NP_059340.1">
    <property type="nucleotide sequence ID" value="NC_002333.2"/>
</dbReference>
<dbReference type="SMR" id="Q9MIY1"/>
<dbReference type="FunCoup" id="Q9MIY1">
    <property type="interactions" value="11"/>
</dbReference>
<dbReference type="STRING" id="7955.ENSDARP00000087878"/>
<dbReference type="PaxDb" id="7955-ENSDARP00000087878"/>
<dbReference type="Ensembl" id="ENSDART00000093618">
    <property type="protein sequence ID" value="ENSDARP00000087878"/>
    <property type="gene ID" value="ENSDARG00000063917"/>
</dbReference>
<dbReference type="GeneID" id="140534"/>
<dbReference type="KEGG" id="dre:140534"/>
<dbReference type="AGR" id="ZFIN:ZDB-GENE-011205-10"/>
<dbReference type="CTD" id="4538"/>
<dbReference type="ZFIN" id="ZDB-GENE-011205-10">
    <property type="gene designation" value="mt-nd4"/>
</dbReference>
<dbReference type="eggNOG" id="KOG4845">
    <property type="taxonomic scope" value="Eukaryota"/>
</dbReference>
<dbReference type="HOGENOM" id="CLU_007100_4_0_1"/>
<dbReference type="InParanoid" id="Q9MIY1"/>
<dbReference type="OMA" id="ITRWGNQ"/>
<dbReference type="OrthoDB" id="564260at2759"/>
<dbReference type="PhylomeDB" id="Q9MIY1"/>
<dbReference type="TreeFam" id="TF343520"/>
<dbReference type="Reactome" id="R-DRE-611105">
    <property type="pathway name" value="Respiratory electron transport"/>
</dbReference>
<dbReference type="PRO" id="PR:Q9MIY1"/>
<dbReference type="Proteomes" id="UP000000437">
    <property type="component" value="Mitochondrion MT"/>
</dbReference>
<dbReference type="Bgee" id="ENSDARG00000063917">
    <property type="expression patterns" value="Expressed in brain and 20 other cell types or tissues"/>
</dbReference>
<dbReference type="GO" id="GO:0005743">
    <property type="term" value="C:mitochondrial inner membrane"/>
    <property type="evidence" value="ECO:0000250"/>
    <property type="project" value="UniProtKB"/>
</dbReference>
<dbReference type="GO" id="GO:0045271">
    <property type="term" value="C:respiratory chain complex I"/>
    <property type="evidence" value="ECO:0000318"/>
    <property type="project" value="GO_Central"/>
</dbReference>
<dbReference type="GO" id="GO:0008137">
    <property type="term" value="F:NADH dehydrogenase (ubiquinone) activity"/>
    <property type="evidence" value="ECO:0000250"/>
    <property type="project" value="UniProtKB"/>
</dbReference>
<dbReference type="GO" id="GO:0048039">
    <property type="term" value="F:ubiquinone binding"/>
    <property type="evidence" value="ECO:0000318"/>
    <property type="project" value="GO_Central"/>
</dbReference>
<dbReference type="GO" id="GO:0009060">
    <property type="term" value="P:aerobic respiration"/>
    <property type="evidence" value="ECO:0000318"/>
    <property type="project" value="GO_Central"/>
</dbReference>
<dbReference type="GO" id="GO:0015990">
    <property type="term" value="P:electron transport coupled proton transport"/>
    <property type="evidence" value="ECO:0000318"/>
    <property type="project" value="GO_Central"/>
</dbReference>
<dbReference type="GO" id="GO:0006120">
    <property type="term" value="P:mitochondrial electron transport, NADH to ubiquinone"/>
    <property type="evidence" value="ECO:0000250"/>
    <property type="project" value="UniProtKB"/>
</dbReference>
<dbReference type="GO" id="GO:0032981">
    <property type="term" value="P:mitochondrial respiratory chain complex I assembly"/>
    <property type="evidence" value="ECO:0000250"/>
    <property type="project" value="UniProtKB"/>
</dbReference>
<dbReference type="InterPro" id="IPR000260">
    <property type="entry name" value="NADH4_N"/>
</dbReference>
<dbReference type="InterPro" id="IPR010227">
    <property type="entry name" value="NADH_Q_OxRdtase_chainM/4"/>
</dbReference>
<dbReference type="InterPro" id="IPR003918">
    <property type="entry name" value="NADH_UbQ_OxRdtase"/>
</dbReference>
<dbReference type="InterPro" id="IPR001750">
    <property type="entry name" value="ND/Mrp_TM"/>
</dbReference>
<dbReference type="NCBIfam" id="TIGR01972">
    <property type="entry name" value="NDH_I_M"/>
    <property type="match status" value="1"/>
</dbReference>
<dbReference type="PANTHER" id="PTHR43507">
    <property type="entry name" value="NADH-UBIQUINONE OXIDOREDUCTASE CHAIN 4"/>
    <property type="match status" value="1"/>
</dbReference>
<dbReference type="PANTHER" id="PTHR43507:SF20">
    <property type="entry name" value="NADH-UBIQUINONE OXIDOREDUCTASE CHAIN 4"/>
    <property type="match status" value="1"/>
</dbReference>
<dbReference type="Pfam" id="PF01059">
    <property type="entry name" value="Oxidored_q5_N"/>
    <property type="match status" value="1"/>
</dbReference>
<dbReference type="Pfam" id="PF00361">
    <property type="entry name" value="Proton_antipo_M"/>
    <property type="match status" value="1"/>
</dbReference>
<dbReference type="PRINTS" id="PR01437">
    <property type="entry name" value="NUOXDRDTASE4"/>
</dbReference>